<keyword id="KW-0067">ATP-binding</keyword>
<keyword id="KW-0414">Isoprene biosynthesis</keyword>
<keyword id="KW-0418">Kinase</keyword>
<keyword id="KW-0547">Nucleotide-binding</keyword>
<keyword id="KW-0808">Transferase</keyword>
<comment type="function">
    <text evidence="1">Catalyzes the phosphorylation of the position 2 hydroxy group of 4-diphosphocytidyl-2C-methyl-D-erythritol.</text>
</comment>
<comment type="catalytic activity">
    <reaction evidence="1">
        <text>4-CDP-2-C-methyl-D-erythritol + ATP = 4-CDP-2-C-methyl-D-erythritol 2-phosphate + ADP + H(+)</text>
        <dbReference type="Rhea" id="RHEA:18437"/>
        <dbReference type="ChEBI" id="CHEBI:15378"/>
        <dbReference type="ChEBI" id="CHEBI:30616"/>
        <dbReference type="ChEBI" id="CHEBI:57823"/>
        <dbReference type="ChEBI" id="CHEBI:57919"/>
        <dbReference type="ChEBI" id="CHEBI:456216"/>
        <dbReference type="EC" id="2.7.1.148"/>
    </reaction>
</comment>
<comment type="pathway">
    <text evidence="1">Isoprenoid biosynthesis; isopentenyl diphosphate biosynthesis via DXP pathway; isopentenyl diphosphate from 1-deoxy-D-xylulose 5-phosphate: step 3/6.</text>
</comment>
<comment type="similarity">
    <text evidence="1">Belongs to the GHMP kinase family. IspE subfamily.</text>
</comment>
<organism>
    <name type="scientific">Histophilus somni (strain 129Pt)</name>
    <name type="common">Haemophilus somnus</name>
    <dbReference type="NCBI Taxonomy" id="205914"/>
    <lineage>
        <taxon>Bacteria</taxon>
        <taxon>Pseudomonadati</taxon>
        <taxon>Pseudomonadota</taxon>
        <taxon>Gammaproteobacteria</taxon>
        <taxon>Pasteurellales</taxon>
        <taxon>Pasteurellaceae</taxon>
        <taxon>Histophilus</taxon>
    </lineage>
</organism>
<reference key="1">
    <citation type="journal article" date="2007" name="J. Bacteriol.">
        <title>Complete genome sequence of Haemophilus somnus (Histophilus somni) strain 129Pt and comparison to Haemophilus ducreyi 35000HP and Haemophilus influenzae Rd.</title>
        <authorList>
            <person name="Challacombe J.F."/>
            <person name="Duncan A.J."/>
            <person name="Brettin T.S."/>
            <person name="Bruce D."/>
            <person name="Chertkov O."/>
            <person name="Detter J.C."/>
            <person name="Han C.S."/>
            <person name="Misra M."/>
            <person name="Richardson P."/>
            <person name="Tapia R."/>
            <person name="Thayer N."/>
            <person name="Xie G."/>
            <person name="Inzana T.J."/>
        </authorList>
    </citation>
    <scope>NUCLEOTIDE SEQUENCE [LARGE SCALE GENOMIC DNA]</scope>
    <source>
        <strain>129Pt</strain>
    </source>
</reference>
<evidence type="ECO:0000255" key="1">
    <source>
        <dbReference type="HAMAP-Rule" id="MF_00061"/>
    </source>
</evidence>
<dbReference type="EC" id="2.7.1.148" evidence="1"/>
<dbReference type="EMBL" id="CP000436">
    <property type="protein sequence ID" value="ABI25272.1"/>
    <property type="molecule type" value="Genomic_DNA"/>
</dbReference>
<dbReference type="SMR" id="Q0I368"/>
<dbReference type="KEGG" id="hso:HS_0997"/>
<dbReference type="eggNOG" id="COG1947">
    <property type="taxonomic scope" value="Bacteria"/>
</dbReference>
<dbReference type="HOGENOM" id="CLU_053057_3_0_6"/>
<dbReference type="UniPathway" id="UPA00056">
    <property type="reaction ID" value="UER00094"/>
</dbReference>
<dbReference type="GO" id="GO:0050515">
    <property type="term" value="F:4-(cytidine 5'-diphospho)-2-C-methyl-D-erythritol kinase activity"/>
    <property type="evidence" value="ECO:0007669"/>
    <property type="project" value="UniProtKB-UniRule"/>
</dbReference>
<dbReference type="GO" id="GO:0005524">
    <property type="term" value="F:ATP binding"/>
    <property type="evidence" value="ECO:0007669"/>
    <property type="project" value="UniProtKB-UniRule"/>
</dbReference>
<dbReference type="GO" id="GO:0019288">
    <property type="term" value="P:isopentenyl diphosphate biosynthetic process, methylerythritol 4-phosphate pathway"/>
    <property type="evidence" value="ECO:0007669"/>
    <property type="project" value="UniProtKB-UniRule"/>
</dbReference>
<dbReference type="GO" id="GO:0016114">
    <property type="term" value="P:terpenoid biosynthetic process"/>
    <property type="evidence" value="ECO:0007669"/>
    <property type="project" value="InterPro"/>
</dbReference>
<dbReference type="FunFam" id="3.30.230.10:FF:000022">
    <property type="entry name" value="4-diphosphocytidyl-2-C-methyl-D-erythritol kinase"/>
    <property type="match status" value="1"/>
</dbReference>
<dbReference type="Gene3D" id="3.30.230.10">
    <property type="match status" value="1"/>
</dbReference>
<dbReference type="Gene3D" id="3.30.70.890">
    <property type="entry name" value="GHMP kinase, C-terminal domain"/>
    <property type="match status" value="1"/>
</dbReference>
<dbReference type="HAMAP" id="MF_00061">
    <property type="entry name" value="IspE"/>
    <property type="match status" value="1"/>
</dbReference>
<dbReference type="InterPro" id="IPR013750">
    <property type="entry name" value="GHMP_kinase_C_dom"/>
</dbReference>
<dbReference type="InterPro" id="IPR036554">
    <property type="entry name" value="GHMP_kinase_C_sf"/>
</dbReference>
<dbReference type="InterPro" id="IPR006204">
    <property type="entry name" value="GHMP_kinase_N_dom"/>
</dbReference>
<dbReference type="InterPro" id="IPR004424">
    <property type="entry name" value="IspE"/>
</dbReference>
<dbReference type="InterPro" id="IPR020568">
    <property type="entry name" value="Ribosomal_Su5_D2-typ_SF"/>
</dbReference>
<dbReference type="InterPro" id="IPR014721">
    <property type="entry name" value="Ribsml_uS5_D2-typ_fold_subgr"/>
</dbReference>
<dbReference type="NCBIfam" id="TIGR00154">
    <property type="entry name" value="ispE"/>
    <property type="match status" value="1"/>
</dbReference>
<dbReference type="PANTHER" id="PTHR43527">
    <property type="entry name" value="4-DIPHOSPHOCYTIDYL-2-C-METHYL-D-ERYTHRITOL KINASE, CHLOROPLASTIC"/>
    <property type="match status" value="1"/>
</dbReference>
<dbReference type="PANTHER" id="PTHR43527:SF2">
    <property type="entry name" value="4-DIPHOSPHOCYTIDYL-2-C-METHYL-D-ERYTHRITOL KINASE, CHLOROPLASTIC"/>
    <property type="match status" value="1"/>
</dbReference>
<dbReference type="Pfam" id="PF08544">
    <property type="entry name" value="GHMP_kinases_C"/>
    <property type="match status" value="1"/>
</dbReference>
<dbReference type="Pfam" id="PF00288">
    <property type="entry name" value="GHMP_kinases_N"/>
    <property type="match status" value="1"/>
</dbReference>
<dbReference type="PIRSF" id="PIRSF010376">
    <property type="entry name" value="IspE"/>
    <property type="match status" value="1"/>
</dbReference>
<dbReference type="SUPFAM" id="SSF55060">
    <property type="entry name" value="GHMP Kinase, C-terminal domain"/>
    <property type="match status" value="1"/>
</dbReference>
<dbReference type="SUPFAM" id="SSF54211">
    <property type="entry name" value="Ribosomal protein S5 domain 2-like"/>
    <property type="match status" value="1"/>
</dbReference>
<feature type="chain" id="PRO_1000007853" description="4-diphosphocytidyl-2-C-methyl-D-erythritol kinase">
    <location>
        <begin position="1"/>
        <end position="313"/>
    </location>
</feature>
<feature type="active site" evidence="1">
    <location>
        <position position="27"/>
    </location>
</feature>
<feature type="active site" evidence="1">
    <location>
        <position position="152"/>
    </location>
</feature>
<feature type="binding site" evidence="1">
    <location>
        <begin position="110"/>
        <end position="120"/>
    </location>
    <ligand>
        <name>ATP</name>
        <dbReference type="ChEBI" id="CHEBI:30616"/>
    </ligand>
</feature>
<sequence>MKNYQFSTALLSSQIQGKKLRFPCPAKINLFLYITSQRPDGYHELQTLFQFLNFGDWLSIEIRTDGKIILTSEIPHLKNEDNLIYRAAKLLQQKTGCTLGANLHLDKILPIGGGVGGGSSNAATALVALNYLWNTQLSLSTLAEIGLQLGADVPVFVYGKAAFAEGVGEKLTFCQPPQKWFLVLKPETSISTAIIFKDPNLPRNTPKRPLAELLITKYENDCEKVVLNHYSEVEEALGWLLQYAPARLTGTGACVFAEFANEQAAQSAFLDKPEKYVGFVAQGTNISPLHQMIEYLSQQKQTLCLPNNTNSRG</sequence>
<name>ISPE_HISS1</name>
<accession>Q0I368</accession>
<proteinExistence type="inferred from homology"/>
<protein>
    <recommendedName>
        <fullName evidence="1">4-diphosphocytidyl-2-C-methyl-D-erythritol kinase</fullName>
        <shortName evidence="1">CMK</shortName>
        <ecNumber evidence="1">2.7.1.148</ecNumber>
    </recommendedName>
    <alternativeName>
        <fullName evidence="1">4-(cytidine-5'-diphospho)-2-C-methyl-D-erythritol kinase</fullName>
    </alternativeName>
</protein>
<gene>
    <name evidence="1" type="primary">ispE</name>
    <name type="ordered locus">HS_0997</name>
</gene>